<comment type="function">
    <text evidence="1">Phosphorylation of dTMP to form dTDP in both de novo and salvage pathways of dTTP synthesis.</text>
</comment>
<comment type="catalytic activity">
    <reaction evidence="1">
        <text>dTMP + ATP = dTDP + ADP</text>
        <dbReference type="Rhea" id="RHEA:13517"/>
        <dbReference type="ChEBI" id="CHEBI:30616"/>
        <dbReference type="ChEBI" id="CHEBI:58369"/>
        <dbReference type="ChEBI" id="CHEBI:63528"/>
        <dbReference type="ChEBI" id="CHEBI:456216"/>
        <dbReference type="EC" id="2.7.4.9"/>
    </reaction>
</comment>
<comment type="similarity">
    <text evidence="1">Belongs to the thymidylate kinase family.</text>
</comment>
<sequence>MFITFEGIDGSGKTTQSELLANYFKQIHGENNVVLTREPGGTDFAEKIRGSLLKDNIDPISELLLFTSMRYEHMKELILPALKEGKTVICDRFIDSTIAYQGYGLGVDLSLIRDLHKLVEIKYPDITFILDIDVQVGLSRAKDKNKYEEMSIDFYHKIRKGFQEIAIKESNRCNVITGIADKDNNKVYSEIIDVIRKKKKGMQPL</sequence>
<keyword id="KW-0067">ATP-binding</keyword>
<keyword id="KW-0418">Kinase</keyword>
<keyword id="KW-0545">Nucleotide biosynthesis</keyword>
<keyword id="KW-0547">Nucleotide-binding</keyword>
<keyword id="KW-0808">Transferase</keyword>
<evidence type="ECO:0000255" key="1">
    <source>
        <dbReference type="HAMAP-Rule" id="MF_00165"/>
    </source>
</evidence>
<name>KTHY_WOLPP</name>
<accession>B3CM94</accession>
<reference key="1">
    <citation type="journal article" date="2008" name="Mol. Biol. Evol.">
        <title>Genome evolution of Wolbachia strain wPip from the Culex pipiens group.</title>
        <authorList>
            <person name="Klasson L."/>
            <person name="Walker T."/>
            <person name="Sebaihia M."/>
            <person name="Sanders M.J."/>
            <person name="Quail M.A."/>
            <person name="Lord A."/>
            <person name="Sanders S."/>
            <person name="Earl J."/>
            <person name="O'Neill S.L."/>
            <person name="Thomson N."/>
            <person name="Sinkins S.P."/>
            <person name="Parkhill J."/>
        </authorList>
    </citation>
    <scope>NUCLEOTIDE SEQUENCE [LARGE SCALE GENOMIC DNA]</scope>
    <source>
        <strain>wPip</strain>
    </source>
</reference>
<proteinExistence type="inferred from homology"/>
<organism>
    <name type="scientific">Wolbachia pipientis subsp. Culex pipiens (strain wPip)</name>
    <dbReference type="NCBI Taxonomy" id="570417"/>
    <lineage>
        <taxon>Bacteria</taxon>
        <taxon>Pseudomonadati</taxon>
        <taxon>Pseudomonadota</taxon>
        <taxon>Alphaproteobacteria</taxon>
        <taxon>Rickettsiales</taxon>
        <taxon>Anaplasmataceae</taxon>
        <taxon>Wolbachieae</taxon>
        <taxon>Wolbachia</taxon>
    </lineage>
</organism>
<gene>
    <name evidence="1" type="primary">tmk</name>
    <name type="ordered locus">WP0905</name>
</gene>
<dbReference type="EC" id="2.7.4.9" evidence="1"/>
<dbReference type="EMBL" id="AM999887">
    <property type="protein sequence ID" value="CAQ55013.1"/>
    <property type="molecule type" value="Genomic_DNA"/>
</dbReference>
<dbReference type="RefSeq" id="WP_007302302.1">
    <property type="nucleotide sequence ID" value="NC_010981.1"/>
</dbReference>
<dbReference type="SMR" id="B3CM94"/>
<dbReference type="KEGG" id="wpi:WP0905"/>
<dbReference type="eggNOG" id="COG0125">
    <property type="taxonomic scope" value="Bacteria"/>
</dbReference>
<dbReference type="HOGENOM" id="CLU_049131_0_0_5"/>
<dbReference type="Proteomes" id="UP000008814">
    <property type="component" value="Chromosome"/>
</dbReference>
<dbReference type="GO" id="GO:0005829">
    <property type="term" value="C:cytosol"/>
    <property type="evidence" value="ECO:0007669"/>
    <property type="project" value="TreeGrafter"/>
</dbReference>
<dbReference type="GO" id="GO:0005524">
    <property type="term" value="F:ATP binding"/>
    <property type="evidence" value="ECO:0007669"/>
    <property type="project" value="UniProtKB-UniRule"/>
</dbReference>
<dbReference type="GO" id="GO:0004798">
    <property type="term" value="F:dTMP kinase activity"/>
    <property type="evidence" value="ECO:0007669"/>
    <property type="project" value="UniProtKB-UniRule"/>
</dbReference>
<dbReference type="GO" id="GO:0006233">
    <property type="term" value="P:dTDP biosynthetic process"/>
    <property type="evidence" value="ECO:0007669"/>
    <property type="project" value="InterPro"/>
</dbReference>
<dbReference type="GO" id="GO:0006235">
    <property type="term" value="P:dTTP biosynthetic process"/>
    <property type="evidence" value="ECO:0007669"/>
    <property type="project" value="UniProtKB-UniRule"/>
</dbReference>
<dbReference type="GO" id="GO:0006227">
    <property type="term" value="P:dUDP biosynthetic process"/>
    <property type="evidence" value="ECO:0007669"/>
    <property type="project" value="TreeGrafter"/>
</dbReference>
<dbReference type="CDD" id="cd01672">
    <property type="entry name" value="TMPK"/>
    <property type="match status" value="1"/>
</dbReference>
<dbReference type="FunFam" id="3.40.50.300:FF:000225">
    <property type="entry name" value="Thymidylate kinase"/>
    <property type="match status" value="1"/>
</dbReference>
<dbReference type="Gene3D" id="3.40.50.300">
    <property type="entry name" value="P-loop containing nucleotide triphosphate hydrolases"/>
    <property type="match status" value="1"/>
</dbReference>
<dbReference type="HAMAP" id="MF_00165">
    <property type="entry name" value="Thymidylate_kinase"/>
    <property type="match status" value="1"/>
</dbReference>
<dbReference type="InterPro" id="IPR027417">
    <property type="entry name" value="P-loop_NTPase"/>
</dbReference>
<dbReference type="InterPro" id="IPR039430">
    <property type="entry name" value="Thymidylate_kin-like_dom"/>
</dbReference>
<dbReference type="InterPro" id="IPR018095">
    <property type="entry name" value="Thymidylate_kin_CS"/>
</dbReference>
<dbReference type="InterPro" id="IPR018094">
    <property type="entry name" value="Thymidylate_kinase"/>
</dbReference>
<dbReference type="NCBIfam" id="TIGR00041">
    <property type="entry name" value="DTMP_kinase"/>
    <property type="match status" value="1"/>
</dbReference>
<dbReference type="PANTHER" id="PTHR10344">
    <property type="entry name" value="THYMIDYLATE KINASE"/>
    <property type="match status" value="1"/>
</dbReference>
<dbReference type="PANTHER" id="PTHR10344:SF4">
    <property type="entry name" value="UMP-CMP KINASE 2, MITOCHONDRIAL"/>
    <property type="match status" value="1"/>
</dbReference>
<dbReference type="Pfam" id="PF02223">
    <property type="entry name" value="Thymidylate_kin"/>
    <property type="match status" value="1"/>
</dbReference>
<dbReference type="SUPFAM" id="SSF52540">
    <property type="entry name" value="P-loop containing nucleoside triphosphate hydrolases"/>
    <property type="match status" value="1"/>
</dbReference>
<dbReference type="PROSITE" id="PS01331">
    <property type="entry name" value="THYMIDYLATE_KINASE"/>
    <property type="match status" value="1"/>
</dbReference>
<feature type="chain" id="PRO_1000097444" description="Thymidylate kinase">
    <location>
        <begin position="1"/>
        <end position="205"/>
    </location>
</feature>
<feature type="binding site" evidence="1">
    <location>
        <begin position="7"/>
        <end position="14"/>
    </location>
    <ligand>
        <name>ATP</name>
        <dbReference type="ChEBI" id="CHEBI:30616"/>
    </ligand>
</feature>
<protein>
    <recommendedName>
        <fullName evidence="1">Thymidylate kinase</fullName>
        <ecNumber evidence="1">2.7.4.9</ecNumber>
    </recommendedName>
    <alternativeName>
        <fullName evidence="1">dTMP kinase</fullName>
    </alternativeName>
</protein>